<gene>
    <name evidence="1" type="primary">recF</name>
    <name type="ordered locus">XOO0003</name>
</gene>
<organism>
    <name type="scientific">Xanthomonas oryzae pv. oryzae (strain MAFF 311018)</name>
    <dbReference type="NCBI Taxonomy" id="342109"/>
    <lineage>
        <taxon>Bacteria</taxon>
        <taxon>Pseudomonadati</taxon>
        <taxon>Pseudomonadota</taxon>
        <taxon>Gammaproteobacteria</taxon>
        <taxon>Lysobacterales</taxon>
        <taxon>Lysobacteraceae</taxon>
        <taxon>Xanthomonas</taxon>
    </lineage>
</organism>
<evidence type="ECO:0000255" key="1">
    <source>
        <dbReference type="HAMAP-Rule" id="MF_00365"/>
    </source>
</evidence>
<keyword id="KW-0067">ATP-binding</keyword>
<keyword id="KW-0963">Cytoplasm</keyword>
<keyword id="KW-0227">DNA damage</keyword>
<keyword id="KW-0234">DNA repair</keyword>
<keyword id="KW-0235">DNA replication</keyword>
<keyword id="KW-0238">DNA-binding</keyword>
<keyword id="KW-0547">Nucleotide-binding</keyword>
<keyword id="KW-0742">SOS response</keyword>
<reference key="1">
    <citation type="journal article" date="2005" name="Jpn. Agric. Res. Q.">
        <title>Genome sequence of Xanthomonas oryzae pv. oryzae suggests contribution of large numbers of effector genes and insertion sequences to its race diversity.</title>
        <authorList>
            <person name="Ochiai H."/>
            <person name="Inoue Y."/>
            <person name="Takeya M."/>
            <person name="Sasaki A."/>
            <person name="Kaku H."/>
        </authorList>
    </citation>
    <scope>NUCLEOTIDE SEQUENCE [LARGE SCALE GENOMIC DNA]</scope>
    <source>
        <strain>MAFF 311018</strain>
    </source>
</reference>
<dbReference type="EMBL" id="AP008229">
    <property type="protein sequence ID" value="BAE66758.1"/>
    <property type="molecule type" value="Genomic_DNA"/>
</dbReference>
<dbReference type="RefSeq" id="WP_011407162.1">
    <property type="nucleotide sequence ID" value="NC_007705.1"/>
</dbReference>
<dbReference type="SMR" id="Q2P9L9"/>
<dbReference type="KEGG" id="xom:XOO0003"/>
<dbReference type="HOGENOM" id="CLU_040267_0_0_6"/>
<dbReference type="GO" id="GO:0005737">
    <property type="term" value="C:cytoplasm"/>
    <property type="evidence" value="ECO:0007669"/>
    <property type="project" value="UniProtKB-SubCell"/>
</dbReference>
<dbReference type="GO" id="GO:0005524">
    <property type="term" value="F:ATP binding"/>
    <property type="evidence" value="ECO:0007669"/>
    <property type="project" value="UniProtKB-UniRule"/>
</dbReference>
<dbReference type="GO" id="GO:0003697">
    <property type="term" value="F:single-stranded DNA binding"/>
    <property type="evidence" value="ECO:0007669"/>
    <property type="project" value="UniProtKB-UniRule"/>
</dbReference>
<dbReference type="GO" id="GO:0006260">
    <property type="term" value="P:DNA replication"/>
    <property type="evidence" value="ECO:0007669"/>
    <property type="project" value="UniProtKB-UniRule"/>
</dbReference>
<dbReference type="GO" id="GO:0000731">
    <property type="term" value="P:DNA synthesis involved in DNA repair"/>
    <property type="evidence" value="ECO:0007669"/>
    <property type="project" value="TreeGrafter"/>
</dbReference>
<dbReference type="GO" id="GO:0006302">
    <property type="term" value="P:double-strand break repair"/>
    <property type="evidence" value="ECO:0007669"/>
    <property type="project" value="TreeGrafter"/>
</dbReference>
<dbReference type="GO" id="GO:0009432">
    <property type="term" value="P:SOS response"/>
    <property type="evidence" value="ECO:0007669"/>
    <property type="project" value="UniProtKB-UniRule"/>
</dbReference>
<dbReference type="FunFam" id="1.20.1050.90:FF:000006">
    <property type="entry name" value="DNA replication and repair protein RecF"/>
    <property type="match status" value="1"/>
</dbReference>
<dbReference type="Gene3D" id="3.40.50.300">
    <property type="entry name" value="P-loop containing nucleotide triphosphate hydrolases"/>
    <property type="match status" value="1"/>
</dbReference>
<dbReference type="Gene3D" id="1.20.1050.90">
    <property type="entry name" value="RecF/RecN/SMC, N-terminal domain"/>
    <property type="match status" value="1"/>
</dbReference>
<dbReference type="HAMAP" id="MF_00365">
    <property type="entry name" value="RecF"/>
    <property type="match status" value="1"/>
</dbReference>
<dbReference type="InterPro" id="IPR001238">
    <property type="entry name" value="DNA-binding_RecF"/>
</dbReference>
<dbReference type="InterPro" id="IPR018078">
    <property type="entry name" value="DNA-binding_RecF_CS"/>
</dbReference>
<dbReference type="InterPro" id="IPR027417">
    <property type="entry name" value="P-loop_NTPase"/>
</dbReference>
<dbReference type="InterPro" id="IPR003395">
    <property type="entry name" value="RecF/RecN/SMC_N"/>
</dbReference>
<dbReference type="InterPro" id="IPR042174">
    <property type="entry name" value="RecF_2"/>
</dbReference>
<dbReference type="NCBIfam" id="TIGR00611">
    <property type="entry name" value="recf"/>
    <property type="match status" value="1"/>
</dbReference>
<dbReference type="PANTHER" id="PTHR32182">
    <property type="entry name" value="DNA REPLICATION AND REPAIR PROTEIN RECF"/>
    <property type="match status" value="1"/>
</dbReference>
<dbReference type="PANTHER" id="PTHR32182:SF0">
    <property type="entry name" value="DNA REPLICATION AND REPAIR PROTEIN RECF"/>
    <property type="match status" value="1"/>
</dbReference>
<dbReference type="Pfam" id="PF02463">
    <property type="entry name" value="SMC_N"/>
    <property type="match status" value="1"/>
</dbReference>
<dbReference type="SUPFAM" id="SSF52540">
    <property type="entry name" value="P-loop containing nucleoside triphosphate hydrolases"/>
    <property type="match status" value="1"/>
</dbReference>
<dbReference type="PROSITE" id="PS00617">
    <property type="entry name" value="RECF_1"/>
    <property type="match status" value="1"/>
</dbReference>
<dbReference type="PROSITE" id="PS00618">
    <property type="entry name" value="RECF_2"/>
    <property type="match status" value="1"/>
</dbReference>
<feature type="chain" id="PRO_1000048597" description="DNA replication and repair protein RecF">
    <location>
        <begin position="1"/>
        <end position="362"/>
    </location>
</feature>
<feature type="binding site" evidence="1">
    <location>
        <begin position="30"/>
        <end position="37"/>
    </location>
    <ligand>
        <name>ATP</name>
        <dbReference type="ChEBI" id="CHEBI:30616"/>
    </ligand>
</feature>
<name>RECF_XANOM</name>
<proteinExistence type="inferred from homology"/>
<comment type="function">
    <text evidence="1">The RecF protein is involved in DNA metabolism; it is required for DNA replication and normal SOS inducibility. RecF binds preferentially to single-stranded, linear DNA. It also seems to bind ATP.</text>
</comment>
<comment type="subcellular location">
    <subcellularLocation>
        <location evidence="1">Cytoplasm</location>
    </subcellularLocation>
</comment>
<comment type="similarity">
    <text evidence="1">Belongs to the RecF family.</text>
</comment>
<protein>
    <recommendedName>
        <fullName evidence="1">DNA replication and repair protein RecF</fullName>
    </recommendedName>
</protein>
<sequence>MHVMRLSIHRLRRFQTVELHPASALNLLTGDNGAGKTSVLEALHLMAYGRSFRGRVRDGLIQQGANDLEVFVEWKEGGSAAGERTRRAGLRHSGQEWTGRLDGEDVAQLGSLCAALAVVTFEPGSHVLISGGGEPRRRFLDWGLFHVEPDFLALWRRYVRALKQRNALLKQGAQPRMLDAWDHELAESGETLTSRRMRYLERLQDRLIPVADVIAPSLGLSALTFAPGWKRHEVSLADALLLARDRDRQNGYTSQGPHRADWMPHFDVLPGKDALSRGQAKLTALACLLAQAEDFAFERSEWPVIALDDLGSELDRHHQARVLHRLVSAPAQMLITGTEIPPGLADAGALLHRFHVEHGQVD</sequence>
<accession>Q2P9L9</accession>